<reference key="1">
    <citation type="journal article" date="1988" name="Mol. Cell. Biol.">
        <title>The brown protein of Drosophila melanogaster is similar to the white protein and to components of active transport complexes.</title>
        <authorList>
            <person name="Dreesen T.D."/>
            <person name="Johnson D.H."/>
            <person name="Henikoff S."/>
        </authorList>
    </citation>
    <scope>NUCLEOTIDE SEQUENCE [MRNA]</scope>
</reference>
<reference key="2">
    <citation type="journal article" date="1993" name="Cold Spring Harb. Symp. Quant. Biol.">
        <title>Characterization of sequences responsible for trans-inactivation of the Drosophila brown gene.</title>
        <authorList>
            <person name="Martin-Morris L.E."/>
            <person name="Loughney K."/>
            <person name="Kershisnik E.O."/>
            <person name="Poortinga G."/>
            <person name="Henikoff S."/>
        </authorList>
    </citation>
    <scope>NUCLEOTIDE SEQUENCE [GENOMIC DNA]</scope>
</reference>
<reference key="3">
    <citation type="journal article" date="1995" name="Mol. Gen. Genet.">
        <title>The molecular analysis of brown eye color mutations isolated from geographically discrete populations of Drosophila melanogaster.</title>
        <authorList>
            <person name="Nitasaka E."/>
            <person name="Yamazaki T."/>
            <person name="Green M.M."/>
        </authorList>
    </citation>
    <scope>NUCLEOTIDE SEQUENCE [GENOMIC DNA]</scope>
    <source>
        <strain>IG281</strain>
    </source>
</reference>
<reference key="4">
    <citation type="journal article" date="2000" name="Science">
        <title>The genome sequence of Drosophila melanogaster.</title>
        <authorList>
            <person name="Adams M.D."/>
            <person name="Celniker S.E."/>
            <person name="Holt R.A."/>
            <person name="Evans C.A."/>
            <person name="Gocayne J.D."/>
            <person name="Amanatides P.G."/>
            <person name="Scherer S.E."/>
            <person name="Li P.W."/>
            <person name="Hoskins R.A."/>
            <person name="Galle R.F."/>
            <person name="George R.A."/>
            <person name="Lewis S.E."/>
            <person name="Richards S."/>
            <person name="Ashburner M."/>
            <person name="Henderson S.N."/>
            <person name="Sutton G.G."/>
            <person name="Wortman J.R."/>
            <person name="Yandell M.D."/>
            <person name="Zhang Q."/>
            <person name="Chen L.X."/>
            <person name="Brandon R.C."/>
            <person name="Rogers Y.-H.C."/>
            <person name="Blazej R.G."/>
            <person name="Champe M."/>
            <person name="Pfeiffer B.D."/>
            <person name="Wan K.H."/>
            <person name="Doyle C."/>
            <person name="Baxter E.G."/>
            <person name="Helt G."/>
            <person name="Nelson C.R."/>
            <person name="Miklos G.L.G."/>
            <person name="Abril J.F."/>
            <person name="Agbayani A."/>
            <person name="An H.-J."/>
            <person name="Andrews-Pfannkoch C."/>
            <person name="Baldwin D."/>
            <person name="Ballew R.M."/>
            <person name="Basu A."/>
            <person name="Baxendale J."/>
            <person name="Bayraktaroglu L."/>
            <person name="Beasley E.M."/>
            <person name="Beeson K.Y."/>
            <person name="Benos P.V."/>
            <person name="Berman B.P."/>
            <person name="Bhandari D."/>
            <person name="Bolshakov S."/>
            <person name="Borkova D."/>
            <person name="Botchan M.R."/>
            <person name="Bouck J."/>
            <person name="Brokstein P."/>
            <person name="Brottier P."/>
            <person name="Burtis K.C."/>
            <person name="Busam D.A."/>
            <person name="Butler H."/>
            <person name="Cadieu E."/>
            <person name="Center A."/>
            <person name="Chandra I."/>
            <person name="Cherry J.M."/>
            <person name="Cawley S."/>
            <person name="Dahlke C."/>
            <person name="Davenport L.B."/>
            <person name="Davies P."/>
            <person name="de Pablos B."/>
            <person name="Delcher A."/>
            <person name="Deng Z."/>
            <person name="Mays A.D."/>
            <person name="Dew I."/>
            <person name="Dietz S.M."/>
            <person name="Dodson K."/>
            <person name="Doup L.E."/>
            <person name="Downes M."/>
            <person name="Dugan-Rocha S."/>
            <person name="Dunkov B.C."/>
            <person name="Dunn P."/>
            <person name="Durbin K.J."/>
            <person name="Evangelista C.C."/>
            <person name="Ferraz C."/>
            <person name="Ferriera S."/>
            <person name="Fleischmann W."/>
            <person name="Fosler C."/>
            <person name="Gabrielian A.E."/>
            <person name="Garg N.S."/>
            <person name="Gelbart W.M."/>
            <person name="Glasser K."/>
            <person name="Glodek A."/>
            <person name="Gong F."/>
            <person name="Gorrell J.H."/>
            <person name="Gu Z."/>
            <person name="Guan P."/>
            <person name="Harris M."/>
            <person name="Harris N.L."/>
            <person name="Harvey D.A."/>
            <person name="Heiman T.J."/>
            <person name="Hernandez J.R."/>
            <person name="Houck J."/>
            <person name="Hostin D."/>
            <person name="Houston K.A."/>
            <person name="Howland T.J."/>
            <person name="Wei M.-H."/>
            <person name="Ibegwam C."/>
            <person name="Jalali M."/>
            <person name="Kalush F."/>
            <person name="Karpen G.H."/>
            <person name="Ke Z."/>
            <person name="Kennison J.A."/>
            <person name="Ketchum K.A."/>
            <person name="Kimmel B.E."/>
            <person name="Kodira C.D."/>
            <person name="Kraft C.L."/>
            <person name="Kravitz S."/>
            <person name="Kulp D."/>
            <person name="Lai Z."/>
            <person name="Lasko P."/>
            <person name="Lei Y."/>
            <person name="Levitsky A.A."/>
            <person name="Li J.H."/>
            <person name="Li Z."/>
            <person name="Liang Y."/>
            <person name="Lin X."/>
            <person name="Liu X."/>
            <person name="Mattei B."/>
            <person name="McIntosh T.C."/>
            <person name="McLeod M.P."/>
            <person name="McPherson D."/>
            <person name="Merkulov G."/>
            <person name="Milshina N.V."/>
            <person name="Mobarry C."/>
            <person name="Morris J."/>
            <person name="Moshrefi A."/>
            <person name="Mount S.M."/>
            <person name="Moy M."/>
            <person name="Murphy B."/>
            <person name="Murphy L."/>
            <person name="Muzny D.M."/>
            <person name="Nelson D.L."/>
            <person name="Nelson D.R."/>
            <person name="Nelson K.A."/>
            <person name="Nixon K."/>
            <person name="Nusskern D.R."/>
            <person name="Pacleb J.M."/>
            <person name="Palazzolo M."/>
            <person name="Pittman G.S."/>
            <person name="Pan S."/>
            <person name="Pollard J."/>
            <person name="Puri V."/>
            <person name="Reese M.G."/>
            <person name="Reinert K."/>
            <person name="Remington K."/>
            <person name="Saunders R.D.C."/>
            <person name="Scheeler F."/>
            <person name="Shen H."/>
            <person name="Shue B.C."/>
            <person name="Siden-Kiamos I."/>
            <person name="Simpson M."/>
            <person name="Skupski M.P."/>
            <person name="Smith T.J."/>
            <person name="Spier E."/>
            <person name="Spradling A.C."/>
            <person name="Stapleton M."/>
            <person name="Strong R."/>
            <person name="Sun E."/>
            <person name="Svirskas R."/>
            <person name="Tector C."/>
            <person name="Turner R."/>
            <person name="Venter E."/>
            <person name="Wang A.H."/>
            <person name="Wang X."/>
            <person name="Wang Z.-Y."/>
            <person name="Wassarman D.A."/>
            <person name="Weinstock G.M."/>
            <person name="Weissenbach J."/>
            <person name="Williams S.M."/>
            <person name="Woodage T."/>
            <person name="Worley K.C."/>
            <person name="Wu D."/>
            <person name="Yang S."/>
            <person name="Yao Q.A."/>
            <person name="Ye J."/>
            <person name="Yeh R.-F."/>
            <person name="Zaveri J.S."/>
            <person name="Zhan M."/>
            <person name="Zhang G."/>
            <person name="Zhao Q."/>
            <person name="Zheng L."/>
            <person name="Zheng X.H."/>
            <person name="Zhong F.N."/>
            <person name="Zhong W."/>
            <person name="Zhou X."/>
            <person name="Zhu S.C."/>
            <person name="Zhu X."/>
            <person name="Smith H.O."/>
            <person name="Gibbs R.A."/>
            <person name="Myers E.W."/>
            <person name="Rubin G.M."/>
            <person name="Venter J.C."/>
        </authorList>
    </citation>
    <scope>NUCLEOTIDE SEQUENCE [LARGE SCALE GENOMIC DNA]</scope>
    <source>
        <strain>Berkeley</strain>
    </source>
</reference>
<reference key="5">
    <citation type="journal article" date="2002" name="Genome Biol.">
        <title>Annotation of the Drosophila melanogaster euchromatic genome: a systematic review.</title>
        <authorList>
            <person name="Misra S."/>
            <person name="Crosby M.A."/>
            <person name="Mungall C.J."/>
            <person name="Matthews B.B."/>
            <person name="Campbell K.S."/>
            <person name="Hradecky P."/>
            <person name="Huang Y."/>
            <person name="Kaminker J.S."/>
            <person name="Millburn G.H."/>
            <person name="Prochnik S.E."/>
            <person name="Smith C.D."/>
            <person name="Tupy J.L."/>
            <person name="Whitfield E.J."/>
            <person name="Bayraktaroglu L."/>
            <person name="Berman B.P."/>
            <person name="Bettencourt B.R."/>
            <person name="Celniker S.E."/>
            <person name="de Grey A.D.N.J."/>
            <person name="Drysdale R.A."/>
            <person name="Harris N.L."/>
            <person name="Richter J."/>
            <person name="Russo S."/>
            <person name="Schroeder A.J."/>
            <person name="Shu S.Q."/>
            <person name="Stapleton M."/>
            <person name="Yamada C."/>
            <person name="Ashburner M."/>
            <person name="Gelbart W.M."/>
            <person name="Rubin G.M."/>
            <person name="Lewis S.E."/>
        </authorList>
    </citation>
    <scope>GENOME REANNOTATION</scope>
    <source>
        <strain>Berkeley</strain>
    </source>
</reference>
<reference key="6">
    <citation type="journal article" date="2002" name="Genome Biol.">
        <title>A Drosophila full-length cDNA resource.</title>
        <authorList>
            <person name="Stapleton M."/>
            <person name="Carlson J.W."/>
            <person name="Brokstein P."/>
            <person name="Yu C."/>
            <person name="Champe M."/>
            <person name="George R.A."/>
            <person name="Guarin H."/>
            <person name="Kronmiller B."/>
            <person name="Pacleb J.M."/>
            <person name="Park S."/>
            <person name="Wan K.H."/>
            <person name="Rubin G.M."/>
            <person name="Celniker S.E."/>
        </authorList>
    </citation>
    <scope>NUCLEOTIDE SEQUENCE [LARGE SCALE MRNA] OF 1-316</scope>
    <source>
        <strain>Berkeley</strain>
        <tissue>Head</tissue>
    </source>
</reference>
<reference key="7">
    <citation type="journal article" date="1979" name="Biochem. Genet.">
        <title>Purine transport by malpighian tubules of pteridine-deficient eye color mutants of Drosophila melanogaster.</title>
        <authorList>
            <person name="Sullivan D.T."/>
            <person name="Bell L.A."/>
            <person name="Paton D.R."/>
            <person name="Sullivan M.C."/>
        </authorList>
    </citation>
    <scope>FUNCTION</scope>
    <scope>CATALYTIC ACTIVITY</scope>
    <scope>DISRUPTION PHENOTYPE</scope>
</reference>
<reference key="8">
    <citation type="journal article" date="1994" name="J. Biol. Chem.">
        <title>Mutational analysis of the traffic ATPase (ABC) transporters involved in uptake of eye pigment precursors in Drosophila melanogaster. Implications for structure-function relationships.</title>
        <authorList>
            <person name="Ewart G.D."/>
            <person name="Cannell D."/>
            <person name="Cox G.B."/>
            <person name="Howells A.J."/>
        </authorList>
    </citation>
    <scope>FUNCTION</scope>
    <scope>SUBUNIT</scope>
    <scope>MUTAGENESIS OF GLY-578 AND ASN-638</scope>
</reference>
<reference key="9">
    <citation type="journal article" date="1999" name="Biochim. Biophys. Acta">
        <title>Mutations in the white gene of Drosophila melanogaster affecting ABC transporters that determine eye colouration.</title>
        <authorList>
            <person name="Mackenzie S.M."/>
            <person name="Brooker M.R."/>
            <person name="Gill T.R."/>
            <person name="Cox G.B."/>
            <person name="Howells A.J."/>
            <person name="Ewart G.D."/>
        </authorList>
    </citation>
    <scope>FUNCTION</scope>
    <scope>DISRUPTION PHENOTYPE</scope>
</reference>
<reference key="10">
    <citation type="journal article" date="2008" name="J. Exp. Biol.">
        <title>Drosophila ABC transporter mutants white, brown and scarlet have altered contents and distribution of biogenic amines in the brain.</title>
        <authorList>
            <person name="Borycz J."/>
            <person name="Borycz J.A."/>
            <person name="Kubow A."/>
            <person name="Lloyd V."/>
            <person name="Meinertzhagen I.A."/>
        </authorList>
    </citation>
    <scope>FUNCTION</scope>
    <scope>SUBUNIT</scope>
    <scope>DISRUPTION PHENOTYPE</scope>
</reference>
<reference key="11">
    <citation type="journal article" date="2021" name="Nat. Metab.">
        <title>white regulates proliferative homeostasis of intestinal stem cells during ageing in Drosophila.</title>
        <authorList>
            <person name="Sasaki A."/>
            <person name="Nishimura T."/>
            <person name="Takano T."/>
            <person name="Naito S."/>
            <person name="Yoo S.K."/>
        </authorList>
    </citation>
    <scope>FUNCTION</scope>
    <scope>CATALYTIC ACTIVITY</scope>
    <scope>INDUCTION</scope>
    <scope>DISRUPTION PHENOTYPE</scope>
</reference>
<keyword id="KW-0067">ATP-binding</keyword>
<keyword id="KW-0472">Membrane</keyword>
<keyword id="KW-0547">Nucleotide-binding</keyword>
<keyword id="KW-0608">Pigment</keyword>
<keyword id="KW-1185">Reference proteome</keyword>
<keyword id="KW-1278">Translocase</keyword>
<keyword id="KW-0812">Transmembrane</keyword>
<keyword id="KW-1133">Transmembrane helix</keyword>
<keyword id="KW-0813">Transport</keyword>
<gene>
    <name evidence="14" type="primary">bw</name>
    <name evidence="14" type="ORF">CG17632</name>
</gene>
<sequence>MQESGGSSGQGGPSLCLEWKQLNYYVPDQEQSNYSFWNECRKKRELRILQDASGHMKTGDLIAILGGSGAGKTTLLAAISQRLRGNLTGDVVLNGMAMERHQMTRISSFLPQFEINVKTFTAYEHLYFMSHFKMHRRTTKAEKRQRVADLLLAVGLRDAAHTRIQQLSGGERKRLSLAEELITDPIFLFCDEPTTGLDSFSAYSVIKTLRHLCTRRRIAKHSLNQVYGEDSFETPSGESSASGSGSKSIEMEVVAESHESLLQTMRELPALGVLSNSPNGTHKKAAICSIHQPTSDIFELFTHIILMDGGRIVYQGRTEQAAKFFTDLGYELPLNCNPADFYLKTLADKEGKENAGAVLRAKYEHETDGLYSGSWLLARSYSGDYLKHVQNFKKIRWIYQVYLLMVRFMTEDLRNIRSGLIAFGFFMITAVTLSLMYSGIGGLTQRTVQDVGGSIFMLSNEMIFTFSYGVTYIFPAALPIIRREVGEGTYSLSAYYVALVLSFVPVAFFKGYVFLSVIYASIYYTRGFLLYLSMGFLMSLSAVAAVGYGVFLSSLFESDKMASECAAPFDLIFLIFGGTYMNVDTVPGLKYLSLFFYSNEALMYKFWIDIDNIDCPVNEDHPCIKTGVEVLQQGSYRNADYTYWLDCFSLVVVAVIFHIVSFGLVRRYIHRSGYY</sequence>
<evidence type="ECO:0000255" key="1"/>
<evidence type="ECO:0000255" key="2">
    <source>
        <dbReference type="PROSITE-ProRule" id="PRU00434"/>
    </source>
</evidence>
<evidence type="ECO:0000256" key="3">
    <source>
        <dbReference type="SAM" id="MobiDB-lite"/>
    </source>
</evidence>
<evidence type="ECO:0000269" key="4">
    <source>
    </source>
</evidence>
<evidence type="ECO:0000269" key="5">
    <source>
    </source>
</evidence>
<evidence type="ECO:0000269" key="6">
    <source>
    </source>
</evidence>
<evidence type="ECO:0000269" key="7">
    <source>
    </source>
</evidence>
<evidence type="ECO:0000269" key="8">
    <source>
    </source>
</evidence>
<evidence type="ECO:0000305" key="9"/>
<evidence type="ECO:0000305" key="10">
    <source>
    </source>
</evidence>
<evidence type="ECO:0000305" key="11">
    <source>
    </source>
</evidence>
<evidence type="ECO:0000305" key="12">
    <source>
    </source>
</evidence>
<evidence type="ECO:0000305" key="13">
    <source>
    </source>
</evidence>
<evidence type="ECO:0000312" key="14">
    <source>
        <dbReference type="FlyBase" id="FBgn0000241"/>
    </source>
</evidence>
<organism>
    <name type="scientific">Drosophila melanogaster</name>
    <name type="common">Fruit fly</name>
    <dbReference type="NCBI Taxonomy" id="7227"/>
    <lineage>
        <taxon>Eukaryota</taxon>
        <taxon>Metazoa</taxon>
        <taxon>Ecdysozoa</taxon>
        <taxon>Arthropoda</taxon>
        <taxon>Hexapoda</taxon>
        <taxon>Insecta</taxon>
        <taxon>Pterygota</taxon>
        <taxon>Neoptera</taxon>
        <taxon>Endopterygota</taxon>
        <taxon>Diptera</taxon>
        <taxon>Brachycera</taxon>
        <taxon>Muscomorpha</taxon>
        <taxon>Ephydroidea</taxon>
        <taxon>Drosophilidae</taxon>
        <taxon>Drosophila</taxon>
        <taxon>Sophophora</taxon>
    </lineage>
</organism>
<comment type="function">
    <text evidence="4 5 6 7 8">ATP-dependent transporter of the ATP-binding cassette (ABC) family which transports various molecules including bioamines, neurotransmitters and metabolic intermediates (PubMed:10407069, PubMed:117796, PubMed:18931318, PubMed:33820991, PubMed:8144619). In the eye and probably in association with w/white, required for the transport of the eye red pigment precursor, guanine, into pigment cell granules (PubMed:117796, PubMed:8144619). In Malpighian tubules, involved in guanine uptake (PubMed:117796). Probably in association with w/white, involved in aging-induced intestinal stem cell proliferation in the midgut by regulating tetrahydrofolate transport (PubMed:33820991).</text>
</comment>
<comment type="catalytic activity">
    <reaction evidence="10">
        <text>guanine(out) + ATP + H2O = guanine(in) + ADP + phosphate + H(+)</text>
        <dbReference type="Rhea" id="RHEA:20832"/>
        <dbReference type="ChEBI" id="CHEBI:15377"/>
        <dbReference type="ChEBI" id="CHEBI:15378"/>
        <dbReference type="ChEBI" id="CHEBI:16235"/>
        <dbReference type="ChEBI" id="CHEBI:30616"/>
        <dbReference type="ChEBI" id="CHEBI:43474"/>
        <dbReference type="ChEBI" id="CHEBI:456216"/>
        <dbReference type="EC" id="7.6.2.6"/>
    </reaction>
</comment>
<comment type="catalytic activity">
    <reaction evidence="12">
        <text>riboflavin(in) + ATP + H2O = riboflavin(out) + ADP + phosphate + H(+)</text>
        <dbReference type="Rhea" id="RHEA:61352"/>
        <dbReference type="ChEBI" id="CHEBI:15377"/>
        <dbReference type="ChEBI" id="CHEBI:15378"/>
        <dbReference type="ChEBI" id="CHEBI:30616"/>
        <dbReference type="ChEBI" id="CHEBI:43474"/>
        <dbReference type="ChEBI" id="CHEBI:57986"/>
        <dbReference type="ChEBI" id="CHEBI:456216"/>
    </reaction>
</comment>
<comment type="catalytic activity">
    <reaction evidence="12">
        <text>(6S)-5,6,7,8-tetrahydrofolate(out) + ATP + H2O = (6S)-5,6,7,8-tetrahydrofolate(in) + ADP + phosphate + H(+)</text>
        <dbReference type="Rhea" id="RHEA:68592"/>
        <dbReference type="ChEBI" id="CHEBI:15377"/>
        <dbReference type="ChEBI" id="CHEBI:15378"/>
        <dbReference type="ChEBI" id="CHEBI:30616"/>
        <dbReference type="ChEBI" id="CHEBI:43474"/>
        <dbReference type="ChEBI" id="CHEBI:57453"/>
        <dbReference type="ChEBI" id="CHEBI:456216"/>
    </reaction>
</comment>
<comment type="subunit">
    <text evidence="11 13">May form a heterodimer with w/white.</text>
</comment>
<comment type="subcellular location">
    <subcellularLocation>
        <location evidence="1">Membrane</location>
        <topology evidence="1">Multi-pass membrane protein</topology>
    </subcellularLocation>
</comment>
<comment type="induction">
    <text evidence="7">Up-regulated during aging in intestinal stem cells.</text>
</comment>
<comment type="disruption phenotype">
    <text evidence="4 5 6 7">Eyes are brown due to a defect in red pigment production (PubMed:10407069). In Malpighian tubules, guanine uptake is impaired (PubMed:117796). Reduces the levels of several metabolites, including kynurenine, kynurenic acid, 3-hydroxykynurenine, guanosine, xanthine, urate, riboflavin, and tetrahydrofolate, and increases the levels of guanine (PubMed:33820991). In the head, levels of neurotransmitters histamine, dopamine and serotonin are reduced; specifically, histamine is reduced in the retina (PubMed:18931318). Severe loss of white protein in the retina lamina and photoreceptors (PubMed:18931318). In addition, in lamina photoreceptor terminals R1-R6, number of synaptic vesicles is reduced (PubMed:18931318). Inhibits aging-induced intestinal stem cell proliferation (PubMed:33820991).</text>
</comment>
<comment type="similarity">
    <text evidence="9">Belongs to the ABC transporter superfamily. ABCG family. Eye pigment precursor importer (TC 3.A.1.204) subfamily.</text>
</comment>
<comment type="sequence caution" evidence="9">
    <conflict type="miscellaneous discrepancy">
        <sequence resource="EMBL-CDS" id="AAM50157"/>
    </conflict>
    <text>Probable cloning artifact.</text>
</comment>
<feature type="chain" id="PRO_0000093375" description="Protein brown">
    <location>
        <begin position="1"/>
        <end position="675"/>
    </location>
</feature>
<feature type="topological domain" description="Cytoplasmic" evidence="9">
    <location>
        <begin position="1"/>
        <end position="419"/>
    </location>
</feature>
<feature type="transmembrane region" description="Helical" evidence="1">
    <location>
        <begin position="420"/>
        <end position="440"/>
    </location>
</feature>
<feature type="topological domain" description="Extracellular" evidence="9">
    <location>
        <begin position="441"/>
        <end position="460"/>
    </location>
</feature>
<feature type="transmembrane region" description="Helical" evidence="1">
    <location>
        <begin position="461"/>
        <end position="481"/>
    </location>
</feature>
<feature type="topological domain" description="Cytoplasmic" evidence="9">
    <location>
        <begin position="482"/>
        <end position="497"/>
    </location>
</feature>
<feature type="transmembrane region" description="Helical" evidence="1">
    <location>
        <begin position="498"/>
        <end position="518"/>
    </location>
</feature>
<feature type="topological domain" description="Extracellular" evidence="9">
    <location>
        <begin position="519"/>
        <end position="531"/>
    </location>
</feature>
<feature type="transmembrane region" description="Helical" evidence="1">
    <location>
        <begin position="532"/>
        <end position="552"/>
    </location>
</feature>
<feature type="topological domain" description="Cytoplasmic" evidence="9">
    <location>
        <begin position="553"/>
        <end position="568"/>
    </location>
</feature>
<feature type="transmembrane region" description="Helical" evidence="1">
    <location>
        <begin position="569"/>
        <end position="589"/>
    </location>
</feature>
<feature type="topological domain" description="Extracellular" evidence="9">
    <location>
        <begin position="590"/>
        <end position="644"/>
    </location>
</feature>
<feature type="transmembrane region" description="Helical" evidence="1">
    <location>
        <begin position="645"/>
        <end position="665"/>
    </location>
</feature>
<feature type="topological domain" description="Cytoplasmic" evidence="9">
    <location>
        <begin position="666"/>
        <end position="675"/>
    </location>
</feature>
<feature type="domain" description="ABC transporter" evidence="2">
    <location>
        <begin position="34"/>
        <end position="261"/>
    </location>
</feature>
<feature type="region of interest" description="Disordered" evidence="3">
    <location>
        <begin position="229"/>
        <end position="249"/>
    </location>
</feature>
<feature type="compositionally biased region" description="Low complexity" evidence="3">
    <location>
        <begin position="236"/>
        <end position="248"/>
    </location>
</feature>
<feature type="binding site" evidence="2">
    <location>
        <begin position="66"/>
        <end position="73"/>
    </location>
    <ligand>
        <name>ATP</name>
        <dbReference type="ChEBI" id="CHEBI:30616"/>
    </ligand>
</feature>
<feature type="mutagenesis site" description="In T50; normal eye color. Eyes are brown due to a reduction in red pigment production in a w/white co2 mutant background." evidence="8">
    <original>G</original>
    <variation>D</variation>
    <location>
        <position position="578"/>
    </location>
</feature>
<feature type="mutagenesis site" description="In 6; normal eye color. Eyes are brown due to a reduction in red pigment production in a w/white co2 mutant background." evidence="8">
    <original>N</original>
    <variation>T</variation>
    <location>
        <position position="638"/>
    </location>
</feature>
<feature type="sequence conflict" description="In Ref. 2; AAC37214, 3; AAA28398 and 6; AAM50157." evidence="9" ref="2 3 6">
    <original>D</original>
    <variation>A</variation>
    <location>
        <position position="28"/>
    </location>
</feature>
<feature type="sequence conflict" description="In Ref. 3; AAA28398." evidence="9" ref="3">
    <original>R</original>
    <variation>P</variation>
    <location>
        <position position="44"/>
    </location>
</feature>
<feature type="sequence conflict" description="In Ref. 2; AAC37214 and 3; AAA28398." evidence="9" ref="2 3">
    <original>L</original>
    <variation>I</variation>
    <location>
        <position position="274"/>
    </location>
</feature>
<feature type="sequence conflict" description="In Ref. 2; AAC37214." evidence="9" ref="2">
    <original>E</original>
    <variation>Q</variation>
    <location>
        <position position="331"/>
    </location>
</feature>
<feature type="sequence conflict" description="In Ref. 2; AAC37214." evidence="9" ref="2">
    <original>R</original>
    <variation>P</variation>
    <location>
        <position position="407"/>
    </location>
</feature>
<feature type="sequence conflict" description="In Ref. 2; AAC37214 and 3; AAA28398." evidence="9" ref="2 3">
    <original>N</original>
    <variation>T</variation>
    <location>
        <position position="638"/>
    </location>
</feature>
<accession>P12428</accession>
<accession>Q24264</accession>
<accession>Q7KVI1</accession>
<accession>Q7KVI2</accession>
<accession>Q8MRN9</accession>
<accession>Q9W1N7</accession>
<proteinExistence type="evidence at protein level"/>
<dbReference type="EC" id="7.6.2.-" evidence="12"/>
<dbReference type="EC" id="7.6.2.6" evidence="10"/>
<dbReference type="EMBL" id="M20630">
    <property type="protein sequence ID" value="AAA28397.1"/>
    <property type="molecule type" value="mRNA"/>
</dbReference>
<dbReference type="EMBL" id="L23543">
    <property type="protein sequence ID" value="AAC37214.1"/>
    <property type="molecule type" value="Genomic_DNA"/>
</dbReference>
<dbReference type="EMBL" id="L05635">
    <property type="protein sequence ID" value="AAA28398.1"/>
    <property type="molecule type" value="Genomic_DNA"/>
</dbReference>
<dbReference type="EMBL" id="AE013599">
    <property type="protein sequence ID" value="AAF47020.3"/>
    <property type="molecule type" value="Genomic_DNA"/>
</dbReference>
<dbReference type="EMBL" id="AY119503">
    <property type="protein sequence ID" value="AAM50157.1"/>
    <property type="status" value="ALT_SEQ"/>
    <property type="molecule type" value="mRNA"/>
</dbReference>
<dbReference type="PIR" id="A31399">
    <property type="entry name" value="FYFFB"/>
</dbReference>
<dbReference type="RefSeq" id="NP_001286769.1">
    <property type="nucleotide sequence ID" value="NM_001299840.1"/>
</dbReference>
<dbReference type="RefSeq" id="NP_523824.1">
    <property type="nucleotide sequence ID" value="NM_079100.3"/>
</dbReference>
<dbReference type="SMR" id="P12428"/>
<dbReference type="BioGRID" id="63324">
    <property type="interactions" value="38"/>
</dbReference>
<dbReference type="DIP" id="DIP-387N"/>
<dbReference type="FunCoup" id="P12428">
    <property type="interactions" value="9"/>
</dbReference>
<dbReference type="IntAct" id="P12428">
    <property type="interactions" value="1"/>
</dbReference>
<dbReference type="STRING" id="7227.FBpp0072026"/>
<dbReference type="TCDB" id="3.A.1.204.18">
    <property type="family name" value="the atp-binding cassette (abc) superfamily"/>
</dbReference>
<dbReference type="PaxDb" id="7227-FBpp0072026"/>
<dbReference type="DNASU" id="37724"/>
<dbReference type="EnsemblMetazoa" id="FBtr0072117">
    <property type="protein sequence ID" value="FBpp0072026"/>
    <property type="gene ID" value="FBgn0000241"/>
</dbReference>
<dbReference type="EnsemblMetazoa" id="FBtr0346612">
    <property type="protein sequence ID" value="FBpp0312192"/>
    <property type="gene ID" value="FBgn0000241"/>
</dbReference>
<dbReference type="GeneID" id="37724"/>
<dbReference type="KEGG" id="dme:Dmel_CG17632"/>
<dbReference type="AGR" id="FB:FBgn0000241"/>
<dbReference type="CTD" id="37724"/>
<dbReference type="FlyBase" id="FBgn0000241">
    <property type="gene designation" value="bw"/>
</dbReference>
<dbReference type="VEuPathDB" id="VectorBase:FBgn0000241"/>
<dbReference type="eggNOG" id="KOG0061">
    <property type="taxonomic scope" value="Eukaryota"/>
</dbReference>
<dbReference type="HOGENOM" id="CLU_406887_0_0_1"/>
<dbReference type="InParanoid" id="P12428"/>
<dbReference type="OMA" id="HPCVKSG"/>
<dbReference type="OrthoDB" id="66620at2759"/>
<dbReference type="PhylomeDB" id="P12428"/>
<dbReference type="Reactome" id="R-DME-1369062">
    <property type="pathway name" value="ABC transporters in lipid homeostasis"/>
</dbReference>
<dbReference type="Reactome" id="R-DME-1660661">
    <property type="pathway name" value="Sphingolipid de novo biosynthesis"/>
</dbReference>
<dbReference type="Reactome" id="R-DME-189451">
    <property type="pathway name" value="Heme biosynthesis"/>
</dbReference>
<dbReference type="Reactome" id="R-DME-189483">
    <property type="pathway name" value="Heme degradation"/>
</dbReference>
<dbReference type="Reactome" id="R-DME-917937">
    <property type="pathway name" value="Iron uptake and transport"/>
</dbReference>
<dbReference type="Reactome" id="R-DME-9753281">
    <property type="pathway name" value="Paracetamol ADME"/>
</dbReference>
<dbReference type="Reactome" id="R-DME-9793528">
    <property type="pathway name" value="Ciprofloxacin ADME"/>
</dbReference>
<dbReference type="BioGRID-ORCS" id="37724">
    <property type="hits" value="0 hits in 1 CRISPR screen"/>
</dbReference>
<dbReference type="GenomeRNAi" id="37724"/>
<dbReference type="PRO" id="PR:P12428"/>
<dbReference type="Proteomes" id="UP000000803">
    <property type="component" value="Chromosome 2R"/>
</dbReference>
<dbReference type="Bgee" id="FBgn0000241">
    <property type="expression patterns" value="Expressed in compound eye cone cell in insect head and 19 other cell types or tissues"/>
</dbReference>
<dbReference type="ExpressionAtlas" id="P12428">
    <property type="expression patterns" value="baseline and differential"/>
</dbReference>
<dbReference type="GO" id="GO:0005886">
    <property type="term" value="C:plasma membrane"/>
    <property type="evidence" value="ECO:0000318"/>
    <property type="project" value="GO_Central"/>
</dbReference>
<dbReference type="GO" id="GO:0098793">
    <property type="term" value="C:presynapse"/>
    <property type="evidence" value="ECO:0007669"/>
    <property type="project" value="GOC"/>
</dbReference>
<dbReference type="GO" id="GO:0140359">
    <property type="term" value="F:ABC-type transporter activity"/>
    <property type="evidence" value="ECO:0007669"/>
    <property type="project" value="InterPro"/>
</dbReference>
<dbReference type="GO" id="GO:0005275">
    <property type="term" value="F:amine transmembrane transporter activity"/>
    <property type="evidence" value="ECO:0000315"/>
    <property type="project" value="FlyBase"/>
</dbReference>
<dbReference type="GO" id="GO:0005524">
    <property type="term" value="F:ATP binding"/>
    <property type="evidence" value="ECO:0007669"/>
    <property type="project" value="UniProtKB-KW"/>
</dbReference>
<dbReference type="GO" id="GO:0016887">
    <property type="term" value="F:ATP hydrolysis activity"/>
    <property type="evidence" value="ECO:0007669"/>
    <property type="project" value="InterPro"/>
</dbReference>
<dbReference type="GO" id="GO:0042626">
    <property type="term" value="F:ATPase-coupled transmembrane transporter activity"/>
    <property type="evidence" value="ECO:0000250"/>
    <property type="project" value="FlyBase"/>
</dbReference>
<dbReference type="GO" id="GO:0015208">
    <property type="term" value="F:guanine transmembrane transporter activity"/>
    <property type="evidence" value="ECO:0000315"/>
    <property type="project" value="UniProtKB"/>
</dbReference>
<dbReference type="GO" id="GO:0031409">
    <property type="term" value="F:pigment binding"/>
    <property type="evidence" value="ECO:0007669"/>
    <property type="project" value="UniProtKB-KW"/>
</dbReference>
<dbReference type="GO" id="GO:0015842">
    <property type="term" value="P:aminergic neurotransmitter loading into synaptic vesicle"/>
    <property type="evidence" value="ECO:0000315"/>
    <property type="project" value="FlyBase"/>
</dbReference>
<dbReference type="GO" id="GO:0006856">
    <property type="term" value="P:eye pigment precursor transport"/>
    <property type="evidence" value="ECO:0000304"/>
    <property type="project" value="FlyBase"/>
</dbReference>
<dbReference type="GO" id="GO:0015854">
    <property type="term" value="P:guanine transport"/>
    <property type="evidence" value="ECO:0000315"/>
    <property type="project" value="UniProtKB"/>
</dbReference>
<dbReference type="GO" id="GO:0007605">
    <property type="term" value="P:sensory perception of sound"/>
    <property type="evidence" value="ECO:0000315"/>
    <property type="project" value="FlyBase"/>
</dbReference>
<dbReference type="GO" id="GO:0055085">
    <property type="term" value="P:transmembrane transport"/>
    <property type="evidence" value="ECO:0000315"/>
    <property type="project" value="UniProtKB"/>
</dbReference>
<dbReference type="FunFam" id="3.40.50.300:FF:003236">
    <property type="entry name" value="Protein brown"/>
    <property type="match status" value="1"/>
</dbReference>
<dbReference type="Gene3D" id="3.40.50.300">
    <property type="entry name" value="P-loop containing nucleotide triphosphate hydrolases"/>
    <property type="match status" value="1"/>
</dbReference>
<dbReference type="InterPro" id="IPR003593">
    <property type="entry name" value="AAA+_ATPase"/>
</dbReference>
<dbReference type="InterPro" id="IPR013525">
    <property type="entry name" value="ABC2_TM"/>
</dbReference>
<dbReference type="InterPro" id="IPR003439">
    <property type="entry name" value="ABC_transporter-like_ATP-bd"/>
</dbReference>
<dbReference type="InterPro" id="IPR017871">
    <property type="entry name" value="ABC_transporter-like_CS"/>
</dbReference>
<dbReference type="InterPro" id="IPR043926">
    <property type="entry name" value="ABCG_dom"/>
</dbReference>
<dbReference type="InterPro" id="IPR050352">
    <property type="entry name" value="ABCG_transporters"/>
</dbReference>
<dbReference type="InterPro" id="IPR027417">
    <property type="entry name" value="P-loop_NTPase"/>
</dbReference>
<dbReference type="InterPro" id="IPR005284">
    <property type="entry name" value="Pigment_permease/Abcg"/>
</dbReference>
<dbReference type="NCBIfam" id="TIGR00955">
    <property type="entry name" value="3a01204"/>
    <property type="match status" value="1"/>
</dbReference>
<dbReference type="PANTHER" id="PTHR48041">
    <property type="entry name" value="ABC TRANSPORTER G FAMILY MEMBER 28"/>
    <property type="match status" value="1"/>
</dbReference>
<dbReference type="PANTHER" id="PTHR48041:SF116">
    <property type="entry name" value="PROTEIN BROWN"/>
    <property type="match status" value="1"/>
</dbReference>
<dbReference type="Pfam" id="PF01061">
    <property type="entry name" value="ABC2_membrane"/>
    <property type="match status" value="1"/>
</dbReference>
<dbReference type="Pfam" id="PF19055">
    <property type="entry name" value="ABC2_membrane_7"/>
    <property type="match status" value="1"/>
</dbReference>
<dbReference type="Pfam" id="PF00005">
    <property type="entry name" value="ABC_tran"/>
    <property type="match status" value="1"/>
</dbReference>
<dbReference type="SMART" id="SM00382">
    <property type="entry name" value="AAA"/>
    <property type="match status" value="1"/>
</dbReference>
<dbReference type="SUPFAM" id="SSF52540">
    <property type="entry name" value="P-loop containing nucleoside triphosphate hydrolases"/>
    <property type="match status" value="1"/>
</dbReference>
<dbReference type="PROSITE" id="PS00211">
    <property type="entry name" value="ABC_TRANSPORTER_1"/>
    <property type="match status" value="1"/>
</dbReference>
<dbReference type="PROSITE" id="PS50893">
    <property type="entry name" value="ABC_TRANSPORTER_2"/>
    <property type="match status" value="1"/>
</dbReference>
<name>BROWN_DROME</name>
<protein>
    <recommendedName>
        <fullName>Protein brown</fullName>
        <ecNumber evidence="12">7.6.2.-</ecNumber>
        <ecNumber evidence="10">7.6.2.6</ecNumber>
    </recommendedName>
    <alternativeName>
        <fullName evidence="9">ATP-binding cassette transporter sub-family G member brown</fullName>
    </alternativeName>
    <alternativeName>
        <fullName evidence="9">Broad substrate specificity ATP-binding cassette transporter brown</fullName>
    </alternativeName>
</protein>